<comment type="function">
    <text evidence="1">Catalyzes the reversible reaction in which hydroxymethyl group from 5,10-methylenetetrahydrofolate is transferred onto alpha-ketoisovalerate to form ketopantoate.</text>
</comment>
<comment type="catalytic activity">
    <reaction evidence="1">
        <text>3-methyl-2-oxobutanoate + (6R)-5,10-methylene-5,6,7,8-tetrahydrofolate + H2O = 2-dehydropantoate + (6S)-5,6,7,8-tetrahydrofolate</text>
        <dbReference type="Rhea" id="RHEA:11824"/>
        <dbReference type="ChEBI" id="CHEBI:11561"/>
        <dbReference type="ChEBI" id="CHEBI:11851"/>
        <dbReference type="ChEBI" id="CHEBI:15377"/>
        <dbReference type="ChEBI" id="CHEBI:15636"/>
        <dbReference type="ChEBI" id="CHEBI:57453"/>
        <dbReference type="EC" id="2.1.2.11"/>
    </reaction>
</comment>
<comment type="cofactor">
    <cofactor evidence="1">
        <name>Mg(2+)</name>
        <dbReference type="ChEBI" id="CHEBI:18420"/>
    </cofactor>
    <text evidence="1">Binds 1 Mg(2+) ion per subunit.</text>
</comment>
<comment type="pathway">
    <text evidence="1">Cofactor biosynthesis; (R)-pantothenate biosynthesis; (R)-pantoate from 3-methyl-2-oxobutanoate: step 1/2.</text>
</comment>
<comment type="subunit">
    <text evidence="1">Homodecamer; pentamer of dimers.</text>
</comment>
<comment type="subcellular location">
    <subcellularLocation>
        <location evidence="1">Cytoplasm</location>
    </subcellularLocation>
</comment>
<comment type="similarity">
    <text evidence="1">Belongs to the PanB family.</text>
</comment>
<evidence type="ECO:0000255" key="1">
    <source>
        <dbReference type="HAMAP-Rule" id="MF_00156"/>
    </source>
</evidence>
<organism>
    <name type="scientific">Shewanella sp. (strain MR-7)</name>
    <dbReference type="NCBI Taxonomy" id="60481"/>
    <lineage>
        <taxon>Bacteria</taxon>
        <taxon>Pseudomonadati</taxon>
        <taxon>Pseudomonadota</taxon>
        <taxon>Gammaproteobacteria</taxon>
        <taxon>Alteromonadales</taxon>
        <taxon>Shewanellaceae</taxon>
        <taxon>Shewanella</taxon>
    </lineage>
</organism>
<protein>
    <recommendedName>
        <fullName evidence="1">3-methyl-2-oxobutanoate hydroxymethyltransferase</fullName>
        <ecNumber evidence="1">2.1.2.11</ecNumber>
    </recommendedName>
    <alternativeName>
        <fullName evidence="1">Ketopantoate hydroxymethyltransferase</fullName>
        <shortName evidence="1">KPHMT</shortName>
    </alternativeName>
</protein>
<accession>Q0HRH6</accession>
<proteinExistence type="inferred from homology"/>
<gene>
    <name evidence="1" type="primary">panB</name>
    <name type="ordered locus">Shewmr7_3296</name>
</gene>
<keyword id="KW-0963">Cytoplasm</keyword>
<keyword id="KW-0460">Magnesium</keyword>
<keyword id="KW-0479">Metal-binding</keyword>
<keyword id="KW-0566">Pantothenate biosynthesis</keyword>
<keyword id="KW-0808">Transferase</keyword>
<reference key="1">
    <citation type="submission" date="2006-08" db="EMBL/GenBank/DDBJ databases">
        <title>Complete sequence of chromosome 1 of Shewanella sp. MR-7.</title>
        <authorList>
            <person name="Copeland A."/>
            <person name="Lucas S."/>
            <person name="Lapidus A."/>
            <person name="Barry K."/>
            <person name="Detter J.C."/>
            <person name="Glavina del Rio T."/>
            <person name="Hammon N."/>
            <person name="Israni S."/>
            <person name="Dalin E."/>
            <person name="Tice H."/>
            <person name="Pitluck S."/>
            <person name="Kiss H."/>
            <person name="Brettin T."/>
            <person name="Bruce D."/>
            <person name="Han C."/>
            <person name="Tapia R."/>
            <person name="Gilna P."/>
            <person name="Schmutz J."/>
            <person name="Larimer F."/>
            <person name="Land M."/>
            <person name="Hauser L."/>
            <person name="Kyrpides N."/>
            <person name="Mikhailova N."/>
            <person name="Nealson K."/>
            <person name="Konstantinidis K."/>
            <person name="Klappenbach J."/>
            <person name="Tiedje J."/>
            <person name="Richardson P."/>
        </authorList>
    </citation>
    <scope>NUCLEOTIDE SEQUENCE [LARGE SCALE GENOMIC DNA]</scope>
    <source>
        <strain>MR-7</strain>
    </source>
</reference>
<name>PANB_SHESR</name>
<feature type="chain" id="PRO_0000297373" description="3-methyl-2-oxobutanoate hydroxymethyltransferase">
    <location>
        <begin position="1"/>
        <end position="264"/>
    </location>
</feature>
<feature type="active site" description="Proton acceptor" evidence="1">
    <location>
        <position position="181"/>
    </location>
</feature>
<feature type="binding site" evidence="1">
    <location>
        <begin position="45"/>
        <end position="46"/>
    </location>
    <ligand>
        <name>3-methyl-2-oxobutanoate</name>
        <dbReference type="ChEBI" id="CHEBI:11851"/>
    </ligand>
</feature>
<feature type="binding site" evidence="1">
    <location>
        <position position="45"/>
    </location>
    <ligand>
        <name>Mg(2+)</name>
        <dbReference type="ChEBI" id="CHEBI:18420"/>
    </ligand>
</feature>
<feature type="binding site" evidence="1">
    <location>
        <position position="84"/>
    </location>
    <ligand>
        <name>3-methyl-2-oxobutanoate</name>
        <dbReference type="ChEBI" id="CHEBI:11851"/>
    </ligand>
</feature>
<feature type="binding site" evidence="1">
    <location>
        <position position="84"/>
    </location>
    <ligand>
        <name>Mg(2+)</name>
        <dbReference type="ChEBI" id="CHEBI:18420"/>
    </ligand>
</feature>
<feature type="binding site" evidence="1">
    <location>
        <position position="112"/>
    </location>
    <ligand>
        <name>3-methyl-2-oxobutanoate</name>
        <dbReference type="ChEBI" id="CHEBI:11851"/>
    </ligand>
</feature>
<feature type="binding site" evidence="1">
    <location>
        <position position="114"/>
    </location>
    <ligand>
        <name>Mg(2+)</name>
        <dbReference type="ChEBI" id="CHEBI:18420"/>
    </ligand>
</feature>
<dbReference type="EC" id="2.1.2.11" evidence="1"/>
<dbReference type="EMBL" id="CP000444">
    <property type="protein sequence ID" value="ABI44279.1"/>
    <property type="molecule type" value="Genomic_DNA"/>
</dbReference>
<dbReference type="SMR" id="Q0HRH6"/>
<dbReference type="KEGG" id="shm:Shewmr7_3296"/>
<dbReference type="HOGENOM" id="CLU_036645_1_0_6"/>
<dbReference type="UniPathway" id="UPA00028">
    <property type="reaction ID" value="UER00003"/>
</dbReference>
<dbReference type="GO" id="GO:0005737">
    <property type="term" value="C:cytoplasm"/>
    <property type="evidence" value="ECO:0007669"/>
    <property type="project" value="UniProtKB-SubCell"/>
</dbReference>
<dbReference type="GO" id="GO:0003864">
    <property type="term" value="F:3-methyl-2-oxobutanoate hydroxymethyltransferase activity"/>
    <property type="evidence" value="ECO:0007669"/>
    <property type="project" value="UniProtKB-UniRule"/>
</dbReference>
<dbReference type="GO" id="GO:0000287">
    <property type="term" value="F:magnesium ion binding"/>
    <property type="evidence" value="ECO:0007669"/>
    <property type="project" value="TreeGrafter"/>
</dbReference>
<dbReference type="GO" id="GO:0015940">
    <property type="term" value="P:pantothenate biosynthetic process"/>
    <property type="evidence" value="ECO:0007669"/>
    <property type="project" value="UniProtKB-UniRule"/>
</dbReference>
<dbReference type="CDD" id="cd06557">
    <property type="entry name" value="KPHMT-like"/>
    <property type="match status" value="1"/>
</dbReference>
<dbReference type="FunFam" id="3.20.20.60:FF:000003">
    <property type="entry name" value="3-methyl-2-oxobutanoate hydroxymethyltransferase"/>
    <property type="match status" value="1"/>
</dbReference>
<dbReference type="Gene3D" id="3.20.20.60">
    <property type="entry name" value="Phosphoenolpyruvate-binding domains"/>
    <property type="match status" value="1"/>
</dbReference>
<dbReference type="HAMAP" id="MF_00156">
    <property type="entry name" value="PanB"/>
    <property type="match status" value="1"/>
</dbReference>
<dbReference type="InterPro" id="IPR003700">
    <property type="entry name" value="Pantoate_hydroxy_MeTrfase"/>
</dbReference>
<dbReference type="InterPro" id="IPR015813">
    <property type="entry name" value="Pyrv/PenolPyrv_kinase-like_dom"/>
</dbReference>
<dbReference type="InterPro" id="IPR040442">
    <property type="entry name" value="Pyrv_kinase-like_dom_sf"/>
</dbReference>
<dbReference type="NCBIfam" id="TIGR00222">
    <property type="entry name" value="panB"/>
    <property type="match status" value="1"/>
</dbReference>
<dbReference type="NCBIfam" id="NF001452">
    <property type="entry name" value="PRK00311.1"/>
    <property type="match status" value="1"/>
</dbReference>
<dbReference type="PANTHER" id="PTHR20881">
    <property type="entry name" value="3-METHYL-2-OXOBUTANOATE HYDROXYMETHYLTRANSFERASE"/>
    <property type="match status" value="1"/>
</dbReference>
<dbReference type="PANTHER" id="PTHR20881:SF0">
    <property type="entry name" value="3-METHYL-2-OXOBUTANOATE HYDROXYMETHYLTRANSFERASE"/>
    <property type="match status" value="1"/>
</dbReference>
<dbReference type="Pfam" id="PF02548">
    <property type="entry name" value="Pantoate_transf"/>
    <property type="match status" value="1"/>
</dbReference>
<dbReference type="PIRSF" id="PIRSF000388">
    <property type="entry name" value="Pantoate_hydroxy_MeTrfase"/>
    <property type="match status" value="1"/>
</dbReference>
<dbReference type="SUPFAM" id="SSF51621">
    <property type="entry name" value="Phosphoenolpyruvate/pyruvate domain"/>
    <property type="match status" value="1"/>
</dbReference>
<sequence length="264" mass="28276">MSKVTSSTLLKYKQEGRKFTALTAYDASFASAFDGEGIDVLLVGDSLGMVLQGHDDTLPVTTAEIAYHTRCVRRGIERSLLIADMPFMSYATPEQAMENATALMQAGANMVKLEGGHWLLETVTKLTERGIPVCAHLGLTPQSVHVFGGFKVQGRDAENAQRILDEAKALEAAGAQLLVVECIPESLATAITQALTIPVIGIGAGATTDGQILVMHDVLGISSGYIPRFSKNYLKQTGEIRSAVRAYIEEVANGTFPSSEHTFS</sequence>